<accession>B0TFY7</accession>
<name>SYA_HELMI</name>
<keyword id="KW-0030">Aminoacyl-tRNA synthetase</keyword>
<keyword id="KW-0067">ATP-binding</keyword>
<keyword id="KW-0963">Cytoplasm</keyword>
<keyword id="KW-0436">Ligase</keyword>
<keyword id="KW-0479">Metal-binding</keyword>
<keyword id="KW-0547">Nucleotide-binding</keyword>
<keyword id="KW-0648">Protein biosynthesis</keyword>
<keyword id="KW-1185">Reference proteome</keyword>
<keyword id="KW-0694">RNA-binding</keyword>
<keyword id="KW-0820">tRNA-binding</keyword>
<keyword id="KW-0862">Zinc</keyword>
<organism>
    <name type="scientific">Heliobacterium modesticaldum (strain ATCC 51547 / Ice1)</name>
    <dbReference type="NCBI Taxonomy" id="498761"/>
    <lineage>
        <taxon>Bacteria</taxon>
        <taxon>Bacillati</taxon>
        <taxon>Bacillota</taxon>
        <taxon>Clostridia</taxon>
        <taxon>Eubacteriales</taxon>
        <taxon>Heliobacteriaceae</taxon>
        <taxon>Heliomicrobium</taxon>
    </lineage>
</organism>
<protein>
    <recommendedName>
        <fullName evidence="1">Alanine--tRNA ligase</fullName>
        <ecNumber evidence="1">6.1.1.7</ecNumber>
    </recommendedName>
    <alternativeName>
        <fullName evidence="1">Alanyl-tRNA synthetase</fullName>
        <shortName evidence="1">AlaRS</shortName>
    </alternativeName>
</protein>
<feature type="chain" id="PRO_0000347634" description="Alanine--tRNA ligase">
    <location>
        <begin position="1"/>
        <end position="883"/>
    </location>
</feature>
<feature type="binding site" evidence="1">
    <location>
        <position position="570"/>
    </location>
    <ligand>
        <name>Zn(2+)</name>
        <dbReference type="ChEBI" id="CHEBI:29105"/>
    </ligand>
</feature>
<feature type="binding site" evidence="1">
    <location>
        <position position="574"/>
    </location>
    <ligand>
        <name>Zn(2+)</name>
        <dbReference type="ChEBI" id="CHEBI:29105"/>
    </ligand>
</feature>
<feature type="binding site" evidence="1">
    <location>
        <position position="672"/>
    </location>
    <ligand>
        <name>Zn(2+)</name>
        <dbReference type="ChEBI" id="CHEBI:29105"/>
    </ligand>
</feature>
<feature type="binding site" evidence="1">
    <location>
        <position position="676"/>
    </location>
    <ligand>
        <name>Zn(2+)</name>
        <dbReference type="ChEBI" id="CHEBI:29105"/>
    </ligand>
</feature>
<reference key="1">
    <citation type="journal article" date="2008" name="J. Bacteriol.">
        <title>The genome of Heliobacterium modesticaldum, a phototrophic representative of the Firmicutes containing the simplest photosynthetic apparatus.</title>
        <authorList>
            <person name="Sattley W.M."/>
            <person name="Madigan M.T."/>
            <person name="Swingley W.D."/>
            <person name="Cheung P.C."/>
            <person name="Clocksin K.M."/>
            <person name="Conrad A.L."/>
            <person name="Dejesa L.C."/>
            <person name="Honchak B.M."/>
            <person name="Jung D.O."/>
            <person name="Karbach L.E."/>
            <person name="Kurdoglu A."/>
            <person name="Lahiri S."/>
            <person name="Mastrian S.D."/>
            <person name="Page L.E."/>
            <person name="Taylor H.L."/>
            <person name="Wang Z.T."/>
            <person name="Raymond J."/>
            <person name="Chen M."/>
            <person name="Blankenship R.E."/>
            <person name="Touchman J.W."/>
        </authorList>
    </citation>
    <scope>NUCLEOTIDE SEQUENCE [LARGE SCALE GENOMIC DNA]</scope>
    <source>
        <strain>ATCC 51547 / Ice1</strain>
    </source>
</reference>
<dbReference type="EC" id="6.1.1.7" evidence="1"/>
<dbReference type="EMBL" id="CP000930">
    <property type="protein sequence ID" value="ABZ83144.1"/>
    <property type="molecule type" value="Genomic_DNA"/>
</dbReference>
<dbReference type="RefSeq" id="WP_012281414.1">
    <property type="nucleotide sequence ID" value="NC_010337.2"/>
</dbReference>
<dbReference type="SMR" id="B0TFY7"/>
<dbReference type="STRING" id="498761.HM1_0530"/>
<dbReference type="KEGG" id="hmo:HM1_0530"/>
<dbReference type="eggNOG" id="COG0013">
    <property type="taxonomic scope" value="Bacteria"/>
</dbReference>
<dbReference type="HOGENOM" id="CLU_004485_1_1_9"/>
<dbReference type="OrthoDB" id="9803884at2"/>
<dbReference type="Proteomes" id="UP000008550">
    <property type="component" value="Chromosome"/>
</dbReference>
<dbReference type="GO" id="GO:0005829">
    <property type="term" value="C:cytosol"/>
    <property type="evidence" value="ECO:0007669"/>
    <property type="project" value="TreeGrafter"/>
</dbReference>
<dbReference type="GO" id="GO:0004813">
    <property type="term" value="F:alanine-tRNA ligase activity"/>
    <property type="evidence" value="ECO:0007669"/>
    <property type="project" value="UniProtKB-UniRule"/>
</dbReference>
<dbReference type="GO" id="GO:0002161">
    <property type="term" value="F:aminoacyl-tRNA deacylase activity"/>
    <property type="evidence" value="ECO:0007669"/>
    <property type="project" value="TreeGrafter"/>
</dbReference>
<dbReference type="GO" id="GO:0005524">
    <property type="term" value="F:ATP binding"/>
    <property type="evidence" value="ECO:0007669"/>
    <property type="project" value="UniProtKB-UniRule"/>
</dbReference>
<dbReference type="GO" id="GO:0140096">
    <property type="term" value="F:catalytic activity, acting on a protein"/>
    <property type="evidence" value="ECO:0007669"/>
    <property type="project" value="UniProtKB-ARBA"/>
</dbReference>
<dbReference type="GO" id="GO:0016740">
    <property type="term" value="F:transferase activity"/>
    <property type="evidence" value="ECO:0007669"/>
    <property type="project" value="UniProtKB-ARBA"/>
</dbReference>
<dbReference type="GO" id="GO:0000049">
    <property type="term" value="F:tRNA binding"/>
    <property type="evidence" value="ECO:0007669"/>
    <property type="project" value="UniProtKB-KW"/>
</dbReference>
<dbReference type="GO" id="GO:0008270">
    <property type="term" value="F:zinc ion binding"/>
    <property type="evidence" value="ECO:0007669"/>
    <property type="project" value="UniProtKB-UniRule"/>
</dbReference>
<dbReference type="GO" id="GO:0006419">
    <property type="term" value="P:alanyl-tRNA aminoacylation"/>
    <property type="evidence" value="ECO:0007669"/>
    <property type="project" value="UniProtKB-UniRule"/>
</dbReference>
<dbReference type="CDD" id="cd00673">
    <property type="entry name" value="AlaRS_core"/>
    <property type="match status" value="1"/>
</dbReference>
<dbReference type="FunFam" id="3.10.310.40:FF:000001">
    <property type="entry name" value="Alanine--tRNA ligase"/>
    <property type="match status" value="1"/>
</dbReference>
<dbReference type="FunFam" id="3.30.54.20:FF:000001">
    <property type="entry name" value="Alanine--tRNA ligase"/>
    <property type="match status" value="1"/>
</dbReference>
<dbReference type="FunFam" id="3.30.930.10:FF:000004">
    <property type="entry name" value="Alanine--tRNA ligase"/>
    <property type="match status" value="1"/>
</dbReference>
<dbReference type="FunFam" id="3.30.980.10:FF:000004">
    <property type="entry name" value="Alanine--tRNA ligase, cytoplasmic"/>
    <property type="match status" value="1"/>
</dbReference>
<dbReference type="Gene3D" id="2.40.30.130">
    <property type="match status" value="1"/>
</dbReference>
<dbReference type="Gene3D" id="3.10.310.40">
    <property type="match status" value="1"/>
</dbReference>
<dbReference type="Gene3D" id="3.30.54.20">
    <property type="match status" value="1"/>
</dbReference>
<dbReference type="Gene3D" id="6.10.250.550">
    <property type="match status" value="1"/>
</dbReference>
<dbReference type="Gene3D" id="3.30.930.10">
    <property type="entry name" value="Bira Bifunctional Protein, Domain 2"/>
    <property type="match status" value="1"/>
</dbReference>
<dbReference type="Gene3D" id="3.30.980.10">
    <property type="entry name" value="Threonyl-trna Synthetase, Chain A, domain 2"/>
    <property type="match status" value="1"/>
</dbReference>
<dbReference type="HAMAP" id="MF_00036_B">
    <property type="entry name" value="Ala_tRNA_synth_B"/>
    <property type="match status" value="1"/>
</dbReference>
<dbReference type="InterPro" id="IPR045864">
    <property type="entry name" value="aa-tRNA-synth_II/BPL/LPL"/>
</dbReference>
<dbReference type="InterPro" id="IPR002318">
    <property type="entry name" value="Ala-tRNA-lgiase_IIc"/>
</dbReference>
<dbReference type="InterPro" id="IPR018162">
    <property type="entry name" value="Ala-tRNA-ligase_IIc_anticod-bd"/>
</dbReference>
<dbReference type="InterPro" id="IPR018165">
    <property type="entry name" value="Ala-tRNA-synth_IIc_core"/>
</dbReference>
<dbReference type="InterPro" id="IPR018164">
    <property type="entry name" value="Ala-tRNA-synth_IIc_N"/>
</dbReference>
<dbReference type="InterPro" id="IPR050058">
    <property type="entry name" value="Ala-tRNA_ligase"/>
</dbReference>
<dbReference type="InterPro" id="IPR023033">
    <property type="entry name" value="Ala_tRNA_ligase_euk/bac"/>
</dbReference>
<dbReference type="InterPro" id="IPR003156">
    <property type="entry name" value="DHHA1_dom"/>
</dbReference>
<dbReference type="InterPro" id="IPR018163">
    <property type="entry name" value="Thr/Ala-tRNA-synth_IIc_edit"/>
</dbReference>
<dbReference type="InterPro" id="IPR009000">
    <property type="entry name" value="Transl_B-barrel_sf"/>
</dbReference>
<dbReference type="InterPro" id="IPR012947">
    <property type="entry name" value="tRNA_SAD"/>
</dbReference>
<dbReference type="NCBIfam" id="TIGR00344">
    <property type="entry name" value="alaS"/>
    <property type="match status" value="1"/>
</dbReference>
<dbReference type="PANTHER" id="PTHR11777:SF9">
    <property type="entry name" value="ALANINE--TRNA LIGASE, CYTOPLASMIC"/>
    <property type="match status" value="1"/>
</dbReference>
<dbReference type="PANTHER" id="PTHR11777">
    <property type="entry name" value="ALANYL-TRNA SYNTHETASE"/>
    <property type="match status" value="1"/>
</dbReference>
<dbReference type="Pfam" id="PF02272">
    <property type="entry name" value="DHHA1"/>
    <property type="match status" value="1"/>
</dbReference>
<dbReference type="Pfam" id="PF01411">
    <property type="entry name" value="tRNA-synt_2c"/>
    <property type="match status" value="1"/>
</dbReference>
<dbReference type="Pfam" id="PF07973">
    <property type="entry name" value="tRNA_SAD"/>
    <property type="match status" value="1"/>
</dbReference>
<dbReference type="PRINTS" id="PR00980">
    <property type="entry name" value="TRNASYNTHALA"/>
</dbReference>
<dbReference type="SMART" id="SM00863">
    <property type="entry name" value="tRNA_SAD"/>
    <property type="match status" value="1"/>
</dbReference>
<dbReference type="SUPFAM" id="SSF55681">
    <property type="entry name" value="Class II aaRS and biotin synthetases"/>
    <property type="match status" value="1"/>
</dbReference>
<dbReference type="SUPFAM" id="SSF101353">
    <property type="entry name" value="Putative anticodon-binding domain of alanyl-tRNA synthetase (AlaRS)"/>
    <property type="match status" value="1"/>
</dbReference>
<dbReference type="SUPFAM" id="SSF55186">
    <property type="entry name" value="ThrRS/AlaRS common domain"/>
    <property type="match status" value="1"/>
</dbReference>
<dbReference type="SUPFAM" id="SSF50447">
    <property type="entry name" value="Translation proteins"/>
    <property type="match status" value="1"/>
</dbReference>
<dbReference type="PROSITE" id="PS50860">
    <property type="entry name" value="AA_TRNA_LIGASE_II_ALA"/>
    <property type="match status" value="1"/>
</dbReference>
<sequence>MEFTGNRVRQLFLEYFEQKGHTIVASSSLVPHNDPTLLFSNAGMNQFKDVFLGFEKRPYLRATTSQKCVRAGGKHNDLDTVGRTARHHTFFEMLGNFSFGDYFKKDAIRYAWEFLTDVCGLPKDKLYATVYLDDDEAFALWRDMIGLPEARILRLGEKDNFWAMGDTGPCGPCSEILIDRGEHLRCKAEECAIGKCDCDRWLEIWNLVFMQYNRDENGTMTPLPRPSIDTGMGLERVTSVLQKVGSNYDTDLLRPLIAFVEQLCGQVYHRDDRGFPFRVIADHIRSCTFLITDGVLPSNEGRGYVLRRILRRAVRFGKVLGIDKPFMYEIVPVVVELMGEAYPDIREKQDFVCKVIKIEEERFHETLHDGMRIAADMVAKVKQEGGNVLPGKQAFTLYDTYGFPLDLAEDIAEENGLTVDKDGFQQAMEAQRERARAARQDTAYGAGMELWAELLQQLGPTVFTGYGRTSGESVVKAIVAGATRVTEAGAGTAVQVVLAETPFYAESGGQIGDSGLLRAGDAVVRVEDTKKMAGGLHVHFGVVAEGVFKEGDQVVAEVESARRLAIARHHSATHLMHKALKEVLGEHVNQAGSLVTPDRLRFDFSHFSPLTRDEWNRIEAAVNRAVFQALPVEVFETSIDEAKAMGATALFGEKYGDRVRVVRMGNYSMELCGGTHLDNTSQVGLCKLLSESGIGAGLRRIEAVTGEAALAYLNEQEETVRMLAEKLKVPAAEVTNRVDSLQAQLREKEREMEQLLSRLAKYQIDDLLAGKEEINGVTVLAAKVQAPDMDALRSMSDLLKEKLGSGVLILGAVAGDKVNLVAAATKDIVGRGVHAGNLVKEAAKVCGGGGGGRPDMAQAGGKDPSRLSDALEAAKKLLKSQIK</sequence>
<proteinExistence type="inferred from homology"/>
<comment type="function">
    <text evidence="1">Catalyzes the attachment of alanine to tRNA(Ala) in a two-step reaction: alanine is first activated by ATP to form Ala-AMP and then transferred to the acceptor end of tRNA(Ala). Also edits incorrectly charged Ser-tRNA(Ala) and Gly-tRNA(Ala) via its editing domain.</text>
</comment>
<comment type="catalytic activity">
    <reaction evidence="1">
        <text>tRNA(Ala) + L-alanine + ATP = L-alanyl-tRNA(Ala) + AMP + diphosphate</text>
        <dbReference type="Rhea" id="RHEA:12540"/>
        <dbReference type="Rhea" id="RHEA-COMP:9657"/>
        <dbReference type="Rhea" id="RHEA-COMP:9923"/>
        <dbReference type="ChEBI" id="CHEBI:30616"/>
        <dbReference type="ChEBI" id="CHEBI:33019"/>
        <dbReference type="ChEBI" id="CHEBI:57972"/>
        <dbReference type="ChEBI" id="CHEBI:78442"/>
        <dbReference type="ChEBI" id="CHEBI:78497"/>
        <dbReference type="ChEBI" id="CHEBI:456215"/>
        <dbReference type="EC" id="6.1.1.7"/>
    </reaction>
</comment>
<comment type="cofactor">
    <cofactor evidence="1">
        <name>Zn(2+)</name>
        <dbReference type="ChEBI" id="CHEBI:29105"/>
    </cofactor>
    <text evidence="1">Binds 1 zinc ion per subunit.</text>
</comment>
<comment type="subcellular location">
    <subcellularLocation>
        <location evidence="1">Cytoplasm</location>
    </subcellularLocation>
</comment>
<comment type="domain">
    <text evidence="1">Consists of three domains; the N-terminal catalytic domain, the editing domain and the C-terminal C-Ala domain. The editing domain removes incorrectly charged amino acids, while the C-Ala domain, along with tRNA(Ala), serves as a bridge to cooperatively bring together the editing and aminoacylation centers thus stimulating deacylation of misacylated tRNAs.</text>
</comment>
<comment type="similarity">
    <text evidence="1">Belongs to the class-II aminoacyl-tRNA synthetase family.</text>
</comment>
<evidence type="ECO:0000255" key="1">
    <source>
        <dbReference type="HAMAP-Rule" id="MF_00036"/>
    </source>
</evidence>
<gene>
    <name evidence="1" type="primary">alaS</name>
    <name type="ordered locus">Helmi_02400</name>
    <name type="ORF">HM1_0530</name>
</gene>